<evidence type="ECO:0000250" key="1"/>
<evidence type="ECO:0000305" key="2"/>
<reference key="1">
    <citation type="journal article" date="1996" name="Science">
        <title>Complete genome sequence of the methanogenic archaeon, Methanococcus jannaschii.</title>
        <authorList>
            <person name="Bult C.J."/>
            <person name="White O."/>
            <person name="Olsen G.J."/>
            <person name="Zhou L."/>
            <person name="Fleischmann R.D."/>
            <person name="Sutton G.G."/>
            <person name="Blake J.A."/>
            <person name="FitzGerald L.M."/>
            <person name="Clayton R.A."/>
            <person name="Gocayne J.D."/>
            <person name="Kerlavage A.R."/>
            <person name="Dougherty B.A."/>
            <person name="Tomb J.-F."/>
            <person name="Adams M.D."/>
            <person name="Reich C.I."/>
            <person name="Overbeek R."/>
            <person name="Kirkness E.F."/>
            <person name="Weinstock K.G."/>
            <person name="Merrick J.M."/>
            <person name="Glodek A."/>
            <person name="Scott J.L."/>
            <person name="Geoghagen N.S.M."/>
            <person name="Weidman J.F."/>
            <person name="Fuhrmann J.L."/>
            <person name="Nguyen D."/>
            <person name="Utterback T.R."/>
            <person name="Kelley J.M."/>
            <person name="Peterson J.D."/>
            <person name="Sadow P.W."/>
            <person name="Hanna M.C."/>
            <person name="Cotton M.D."/>
            <person name="Roberts K.M."/>
            <person name="Hurst M.A."/>
            <person name="Kaine B.P."/>
            <person name="Borodovsky M."/>
            <person name="Klenk H.-P."/>
            <person name="Fraser C.M."/>
            <person name="Smith H.O."/>
            <person name="Woese C.R."/>
            <person name="Venter J.C."/>
        </authorList>
    </citation>
    <scope>NUCLEOTIDE SEQUENCE [LARGE SCALE GENOMIC DNA]</scope>
    <source>
        <strain>ATCC 43067 / DSM 2661 / JAL-1 / JCM 10045 / NBRC 100440</strain>
    </source>
</reference>
<reference key="2">
    <citation type="journal article" date="1997" name="J. Mol. Biol.">
        <title>Selenoprotein synthesis in archaea: identification of an mRNA element of Methanococcus jannaschii probably directing selenocysteine insertion.</title>
        <authorList>
            <person name="Wilting R."/>
            <person name="Schorling S."/>
            <person name="Persson B.C."/>
            <person name="Boeck A."/>
        </authorList>
    </citation>
    <scope>PROBABLE SELENOCYSTEINE AT SEC-13 AND SEC-64</scope>
</reference>
<gene>
    <name type="primary">vhuD</name>
    <name type="ordered locus">MJ1190.1</name>
</gene>
<comment type="cofactor">
    <cofactor evidence="1">
        <name>[2Fe-2S] cluster</name>
        <dbReference type="ChEBI" id="CHEBI:190135"/>
    </cofactor>
    <text evidence="1">Binds 1 [2Fe-2S] cluster.</text>
</comment>
<comment type="subunit">
    <text evidence="1">The F420-non-reducing hydrogenase vhu is composed of four subunits; VhuA, VhuD, VhuG and VhuU.</text>
</comment>
<comment type="similarity">
    <text evidence="2">Belongs to the MvhD/VhuD family.</text>
</comment>
<comment type="sequence caution" evidence="2">
    <conflict type="erroneous termination">
        <sequence resource="EMBL-CDS" id="AAB99196"/>
    </conflict>
    <text>Truncated C-terminus.</text>
</comment>
<organism>
    <name type="scientific">Methanocaldococcus jannaschii (strain ATCC 43067 / DSM 2661 / JAL-1 / JCM 10045 / NBRC 100440)</name>
    <name type="common">Methanococcus jannaschii</name>
    <dbReference type="NCBI Taxonomy" id="243232"/>
    <lineage>
        <taxon>Archaea</taxon>
        <taxon>Methanobacteriati</taxon>
        <taxon>Methanobacteriota</taxon>
        <taxon>Methanomada group</taxon>
        <taxon>Methanococci</taxon>
        <taxon>Methanococcales</taxon>
        <taxon>Methanocaldococcaceae</taxon>
        <taxon>Methanocaldococcus</taxon>
    </lineage>
</organism>
<accession>P81334</accession>
<dbReference type="EC" id="1.12.99.-"/>
<dbReference type="EMBL" id="L77117">
    <property type="protein sequence ID" value="AAB99196.1"/>
    <property type="status" value="ALT_SEQ"/>
    <property type="molecule type" value="Genomic_DNA"/>
</dbReference>
<dbReference type="RefSeq" id="WP_244409384.1">
    <property type="nucleotide sequence ID" value="NC_000909.1"/>
</dbReference>
<dbReference type="FunCoup" id="P81334">
    <property type="interactions" value="2"/>
</dbReference>
<dbReference type="STRING" id="243232.MJ_1190.1"/>
<dbReference type="PaxDb" id="243232-MJ_1190.1"/>
<dbReference type="EnsemblBacteria" id="AAB99196">
    <property type="protein sequence ID" value="AAB99196"/>
    <property type="gene ID" value="MJ_1190.1"/>
</dbReference>
<dbReference type="GeneID" id="1452606"/>
<dbReference type="KEGG" id="mja:MJ_1190.1"/>
<dbReference type="eggNOG" id="arCOG02475">
    <property type="taxonomic scope" value="Archaea"/>
</dbReference>
<dbReference type="HOGENOM" id="CLU_3210745_0_0_2"/>
<dbReference type="InParanoid" id="P81334"/>
<dbReference type="PhylomeDB" id="P81334"/>
<dbReference type="Proteomes" id="UP000000805">
    <property type="component" value="Chromosome"/>
</dbReference>
<dbReference type="GO" id="GO:0051537">
    <property type="term" value="F:2 iron, 2 sulfur cluster binding"/>
    <property type="evidence" value="ECO:0007669"/>
    <property type="project" value="UniProtKB-KW"/>
</dbReference>
<dbReference type="GO" id="GO:0046872">
    <property type="term" value="F:metal ion binding"/>
    <property type="evidence" value="ECO:0007669"/>
    <property type="project" value="UniProtKB-KW"/>
</dbReference>
<dbReference type="GO" id="GO:0016491">
    <property type="term" value="F:oxidoreductase activity"/>
    <property type="evidence" value="ECO:0007669"/>
    <property type="project" value="UniProtKB-KW"/>
</dbReference>
<dbReference type="InterPro" id="IPR003813">
    <property type="entry name" value="MvhD/FlpD"/>
</dbReference>
<dbReference type="NCBIfam" id="NF045873">
    <property type="entry name" value="F420_non_VhuD"/>
    <property type="match status" value="1"/>
</dbReference>
<dbReference type="Pfam" id="PF02662">
    <property type="entry name" value="FlpD"/>
    <property type="match status" value="1"/>
</dbReference>
<protein>
    <recommendedName>
        <fullName>F420-non-reducing hydrogenase vhu iron-sulfur subunit D</fullName>
        <ecNumber>1.12.99.-</ecNumber>
    </recommendedName>
</protein>
<keyword id="KW-0001">2Fe-2S</keyword>
<keyword id="KW-0249">Electron transport</keyword>
<keyword id="KW-0408">Iron</keyword>
<keyword id="KW-0411">Iron-sulfur</keyword>
<keyword id="KW-0479">Metal-binding</keyword>
<keyword id="KW-0560">Oxidoreductase</keyword>
<keyword id="KW-1185">Reference proteome</keyword>
<keyword id="KW-0712">Selenocysteine</keyword>
<keyword id="KW-0813">Transport</keyword>
<name>VHUD_METJA</name>
<sequence length="134" mass="14710">MDPVIIAFCCYQUGYGAADLAGTSRMQYPATVRIVRLPCTGKFDITYALRAFQKGADAVMVVGUKKGECAYETGNLKAEERVRFAKQLLDELGIGGDRIDMFFMSAAEADKFVSAVNEMTARVEKLGPNPLKAQ</sequence>
<feature type="chain" id="PRO_0000218278" description="F420-non-reducing hydrogenase vhu iron-sulfur subunit D">
    <location>
        <begin position="1"/>
        <end position="134"/>
    </location>
</feature>
<feature type="non-standard amino acid" description="Selenocysteine" evidence="2">
    <location>
        <position position="13"/>
    </location>
</feature>
<feature type="non-standard amino acid" description="Selenocysteine" evidence="2">
    <location>
        <position position="64"/>
    </location>
</feature>
<proteinExistence type="inferred from homology"/>